<feature type="initiator methionine" description="Removed" evidence="1">
    <location>
        <position position="1"/>
    </location>
</feature>
<feature type="chain" id="PRO_0000087236" description="Acidic fibroblast growth factor intracellular-binding protein">
    <location>
        <begin position="2"/>
        <end position="357"/>
    </location>
</feature>
<feature type="modified residue" description="N-acetylthreonine" evidence="1">
    <location>
        <position position="2"/>
    </location>
</feature>
<protein>
    <recommendedName>
        <fullName>Acidic fibroblast growth factor intracellular-binding protein</fullName>
        <shortName>aFGF intracellular-binding protein</shortName>
    </recommendedName>
    <alternativeName>
        <fullName>FGF-1 intracellular-binding protein</fullName>
    </alternativeName>
</protein>
<comment type="function">
    <text evidence="1 2">May be involved in mitogenic function of FGF1 (By similarity). May mediate with IER2 FGF-signaling in the establishment of laterality in the embryo (By similarity).</text>
</comment>
<comment type="subunit">
    <text evidence="1">Binds to internalized FGF1; this interaction is increased in the presence of CSNKB, suggesting a possible cooperative interaction between CSNKB and FIBP in binding to FGF1.</text>
</comment>
<comment type="subcellular location">
    <subcellularLocation>
        <location evidence="1">Nucleus</location>
    </subcellularLocation>
    <subcellularLocation>
        <location evidence="1">Endomembrane system</location>
        <topology evidence="1">Peripheral membrane protein</topology>
    </subcellularLocation>
    <text evidence="1">Also associated with cytoplasmic membranes, particularly of mitochondria.</text>
</comment>
<accession>O46431</accession>
<proteinExistence type="evidence at transcript level"/>
<sequence length="357" mass="41210">MTSELDIFVGNTTLIDEDVYRLWLDGYSVTDAVALRVRSGILEQTGATAAVLQSDTMDHYRTFHMLERLLHAPPKLLHQLIFQIPPSRQALLIERYYAFDEAFVREVLGKKLSKGTKKDLDDISTKTGITLKSCRRQFDNFKRVFKVVEEMRGSLVDNIQQHFLLSDRLARDYAAIVFFANNRFETGKKKLQYLSFGDFAFCAELMIQNWTLGAVDSQMDDMDMDLDKEFLQDLKELKVLVADKDLLDLHKSLVCTALRGKLGVFSEMEANFKNLSRGLVNVAAKLTHNKDVRDLFVDLVEKFVEPCRSDHWPLSDVRFFLNQYSASVHSLDGFRHQALWDRYMGTLRGCLLRLYHD</sequence>
<reference key="1">
    <citation type="journal article" date="1998" name="Biochem. J.">
        <title>Cloning of an intracellular protein that binds selectively to mitogenic acidic fibroblast growth factor.</title>
        <authorList>
            <person name="Kolpakova E."/>
            <person name="Wiedlocha A."/>
            <person name="Stenmark H."/>
            <person name="Klingenberg O."/>
            <person name="Falnes P.O."/>
            <person name="Olsnes S."/>
        </authorList>
    </citation>
    <scope>NUCLEOTIDE SEQUENCE [MRNA]</scope>
    <source>
        <tissue>Kidney</tissue>
    </source>
</reference>
<dbReference type="EMBL" id="AF010188">
    <property type="protein sequence ID" value="AAC97141.2"/>
    <property type="molecule type" value="mRNA"/>
</dbReference>
<dbReference type="GO" id="GO:0012505">
    <property type="term" value="C:endomembrane system"/>
    <property type="evidence" value="ECO:0007669"/>
    <property type="project" value="UniProtKB-SubCell"/>
</dbReference>
<dbReference type="GO" id="GO:0016020">
    <property type="term" value="C:membrane"/>
    <property type="evidence" value="ECO:0007669"/>
    <property type="project" value="UniProtKB-KW"/>
</dbReference>
<dbReference type="GO" id="GO:0005634">
    <property type="term" value="C:nucleus"/>
    <property type="evidence" value="ECO:0007669"/>
    <property type="project" value="UniProtKB-SubCell"/>
</dbReference>
<dbReference type="GO" id="GO:0017134">
    <property type="term" value="F:fibroblast growth factor binding"/>
    <property type="evidence" value="ECO:0007669"/>
    <property type="project" value="TreeGrafter"/>
</dbReference>
<dbReference type="GO" id="GO:0070527">
    <property type="term" value="P:platelet aggregation"/>
    <property type="evidence" value="ECO:0007669"/>
    <property type="project" value="TreeGrafter"/>
</dbReference>
<dbReference type="InterPro" id="IPR008614">
    <property type="entry name" value="FIBP"/>
</dbReference>
<dbReference type="PANTHER" id="PTHR13223">
    <property type="entry name" value="ACIDIC FIBROBLAST GROWTH FACTOR INTRACELLULAR BINDING PROTEIN"/>
    <property type="match status" value="1"/>
</dbReference>
<dbReference type="PANTHER" id="PTHR13223:SF2">
    <property type="entry name" value="ACIDIC FIBROBLAST GROWTH FACTOR INTRACELLULAR-BINDING PROTEIN"/>
    <property type="match status" value="1"/>
</dbReference>
<dbReference type="Pfam" id="PF05427">
    <property type="entry name" value="FIBP"/>
    <property type="match status" value="1"/>
</dbReference>
<gene>
    <name type="primary">FIBP</name>
</gene>
<evidence type="ECO:0000250" key="1">
    <source>
        <dbReference type="UniProtKB" id="O43427"/>
    </source>
</evidence>
<evidence type="ECO:0000250" key="2">
    <source>
        <dbReference type="UniProtKB" id="Q6T938"/>
    </source>
</evidence>
<keyword id="KW-0007">Acetylation</keyword>
<keyword id="KW-0472">Membrane</keyword>
<keyword id="KW-0539">Nucleus</keyword>
<name>FIBP_CHLAE</name>
<organism>
    <name type="scientific">Chlorocebus aethiops</name>
    <name type="common">Green monkey</name>
    <name type="synonym">Cercopithecus aethiops</name>
    <dbReference type="NCBI Taxonomy" id="9534"/>
    <lineage>
        <taxon>Eukaryota</taxon>
        <taxon>Metazoa</taxon>
        <taxon>Chordata</taxon>
        <taxon>Craniata</taxon>
        <taxon>Vertebrata</taxon>
        <taxon>Euteleostomi</taxon>
        <taxon>Mammalia</taxon>
        <taxon>Eutheria</taxon>
        <taxon>Euarchontoglires</taxon>
        <taxon>Primates</taxon>
        <taxon>Haplorrhini</taxon>
        <taxon>Catarrhini</taxon>
        <taxon>Cercopithecidae</taxon>
        <taxon>Cercopithecinae</taxon>
        <taxon>Chlorocebus</taxon>
    </lineage>
</organism>